<gene>
    <name type="primary">rps7-A</name>
</gene>
<gene>
    <name type="primary">rps7-B</name>
</gene>
<sequence length="155" mass="17357">MSRRGTAEEKTAKSDPIYRNRLVNMLVNRILKHGKKSLAYQIIYRALKKIQQKTETNPLSVLRQAIRGVTPDIAVKARRVGGSTHQVPIEIGSTQGKALAIRWLLGASRKRPGRNMAFKLSSELVDAAKGSGDAIRKKEETHRMAEANRAFAHFR</sequence>
<geneLocation type="chloroplast"/>
<reference key="1">
    <citation type="journal article" date="2006" name="BMC Genomics">
        <title>The complete chloroplast genome sequence of Gossypium hirsutum: organization and phylogenetic relationships to other angiosperms.</title>
        <authorList>
            <person name="Lee S.-B."/>
            <person name="Kaittanis C."/>
            <person name="Jansen R.K."/>
            <person name="Hostetler J.B."/>
            <person name="Tallon L.J."/>
            <person name="Town C.D."/>
            <person name="Daniell H."/>
        </authorList>
    </citation>
    <scope>NUCLEOTIDE SEQUENCE [LARGE SCALE GENOMIC DNA]</scope>
    <source>
        <strain>cv. Coker 310FR</strain>
    </source>
</reference>
<organism>
    <name type="scientific">Gossypium hirsutum</name>
    <name type="common">Upland cotton</name>
    <name type="synonym">Gossypium mexicanum</name>
    <dbReference type="NCBI Taxonomy" id="3635"/>
    <lineage>
        <taxon>Eukaryota</taxon>
        <taxon>Viridiplantae</taxon>
        <taxon>Streptophyta</taxon>
        <taxon>Embryophyta</taxon>
        <taxon>Tracheophyta</taxon>
        <taxon>Spermatophyta</taxon>
        <taxon>Magnoliopsida</taxon>
        <taxon>eudicotyledons</taxon>
        <taxon>Gunneridae</taxon>
        <taxon>Pentapetalae</taxon>
        <taxon>rosids</taxon>
        <taxon>malvids</taxon>
        <taxon>Malvales</taxon>
        <taxon>Malvaceae</taxon>
        <taxon>Malvoideae</taxon>
        <taxon>Gossypium</taxon>
    </lineage>
</organism>
<evidence type="ECO:0000250" key="1"/>
<evidence type="ECO:0000255" key="2">
    <source>
        <dbReference type="HAMAP-Rule" id="MF_00480"/>
    </source>
</evidence>
<evidence type="ECO:0000305" key="3"/>
<keyword id="KW-0150">Chloroplast</keyword>
<keyword id="KW-0934">Plastid</keyword>
<keyword id="KW-1185">Reference proteome</keyword>
<keyword id="KW-0687">Ribonucleoprotein</keyword>
<keyword id="KW-0689">Ribosomal protein</keyword>
<keyword id="KW-0694">RNA-binding</keyword>
<keyword id="KW-0699">rRNA-binding</keyword>
<name>RR7_GOSHI</name>
<accession>Q2L964</accession>
<proteinExistence type="inferred from homology"/>
<protein>
    <recommendedName>
        <fullName evidence="2">Small ribosomal subunit protein uS7cz/uS7cy</fullName>
    </recommendedName>
    <alternativeName>
        <fullName>30S ribosomal protein S7, chloroplastic</fullName>
    </alternativeName>
</protein>
<dbReference type="EMBL" id="DQ345959">
    <property type="protein sequence ID" value="ABC73672.1"/>
    <property type="molecule type" value="Genomic_DNA"/>
</dbReference>
<dbReference type="EMBL" id="DQ345959">
    <property type="protein sequence ID" value="ABC73687.1"/>
    <property type="molecule type" value="Genomic_DNA"/>
</dbReference>
<dbReference type="RefSeq" id="XP_016719336.1">
    <property type="nucleotide sequence ID" value="XM_016863847.1"/>
</dbReference>
<dbReference type="RefSeq" id="XP_016719347.1">
    <property type="nucleotide sequence ID" value="XM_016863858.1"/>
</dbReference>
<dbReference type="RefSeq" id="XP_016719349.1">
    <property type="nucleotide sequence ID" value="XM_016863860.1"/>
</dbReference>
<dbReference type="RefSeq" id="XP_016719357.1">
    <property type="nucleotide sequence ID" value="XM_016863868.1"/>
</dbReference>
<dbReference type="RefSeq" id="XP_016719359.1">
    <property type="nucleotide sequence ID" value="XM_016863870.1"/>
</dbReference>
<dbReference type="SMR" id="Q2L964"/>
<dbReference type="KEGG" id="ghi:3989174"/>
<dbReference type="KEGG" id="ghi:3989218"/>
<dbReference type="OrthoDB" id="20638at41938"/>
<dbReference type="Proteomes" id="UP000189702">
    <property type="component" value="Unplaced"/>
</dbReference>
<dbReference type="GO" id="GO:0009507">
    <property type="term" value="C:chloroplast"/>
    <property type="evidence" value="ECO:0007669"/>
    <property type="project" value="UniProtKB-SubCell"/>
</dbReference>
<dbReference type="GO" id="GO:0005840">
    <property type="term" value="C:ribosome"/>
    <property type="evidence" value="ECO:0000318"/>
    <property type="project" value="GO_Central"/>
</dbReference>
<dbReference type="GO" id="GO:0015935">
    <property type="term" value="C:small ribosomal subunit"/>
    <property type="evidence" value="ECO:0007669"/>
    <property type="project" value="InterPro"/>
</dbReference>
<dbReference type="GO" id="GO:0003729">
    <property type="term" value="F:mRNA binding"/>
    <property type="evidence" value="ECO:0000318"/>
    <property type="project" value="GO_Central"/>
</dbReference>
<dbReference type="GO" id="GO:0019843">
    <property type="term" value="F:rRNA binding"/>
    <property type="evidence" value="ECO:0000318"/>
    <property type="project" value="GO_Central"/>
</dbReference>
<dbReference type="GO" id="GO:0003735">
    <property type="term" value="F:structural constituent of ribosome"/>
    <property type="evidence" value="ECO:0000318"/>
    <property type="project" value="GO_Central"/>
</dbReference>
<dbReference type="GO" id="GO:0000028">
    <property type="term" value="P:ribosomal small subunit assembly"/>
    <property type="evidence" value="ECO:0000318"/>
    <property type="project" value="GO_Central"/>
</dbReference>
<dbReference type="GO" id="GO:0006412">
    <property type="term" value="P:translation"/>
    <property type="evidence" value="ECO:0000318"/>
    <property type="project" value="GO_Central"/>
</dbReference>
<dbReference type="CDD" id="cd14871">
    <property type="entry name" value="uS7_Chloroplast"/>
    <property type="match status" value="1"/>
</dbReference>
<dbReference type="FunFam" id="1.10.455.10:FF:000001">
    <property type="entry name" value="30S ribosomal protein S7"/>
    <property type="match status" value="1"/>
</dbReference>
<dbReference type="Gene3D" id="1.10.455.10">
    <property type="entry name" value="Ribosomal protein S7 domain"/>
    <property type="match status" value="1"/>
</dbReference>
<dbReference type="HAMAP" id="MF_00480_B">
    <property type="entry name" value="Ribosomal_uS7_B"/>
    <property type="match status" value="1"/>
</dbReference>
<dbReference type="InterPro" id="IPR000235">
    <property type="entry name" value="Ribosomal_uS7"/>
</dbReference>
<dbReference type="InterPro" id="IPR005717">
    <property type="entry name" value="Ribosomal_uS7_bac/org-type"/>
</dbReference>
<dbReference type="InterPro" id="IPR020606">
    <property type="entry name" value="Ribosomal_uS7_CS"/>
</dbReference>
<dbReference type="InterPro" id="IPR023798">
    <property type="entry name" value="Ribosomal_uS7_dom"/>
</dbReference>
<dbReference type="InterPro" id="IPR036823">
    <property type="entry name" value="Ribosomal_uS7_dom_sf"/>
</dbReference>
<dbReference type="NCBIfam" id="TIGR01029">
    <property type="entry name" value="rpsG_bact"/>
    <property type="match status" value="1"/>
</dbReference>
<dbReference type="PANTHER" id="PTHR11205">
    <property type="entry name" value="RIBOSOMAL PROTEIN S7"/>
    <property type="match status" value="1"/>
</dbReference>
<dbReference type="Pfam" id="PF00177">
    <property type="entry name" value="Ribosomal_S7"/>
    <property type="match status" value="1"/>
</dbReference>
<dbReference type="PIRSF" id="PIRSF002122">
    <property type="entry name" value="RPS7p_RPS7a_RPS5e_RPS7o"/>
    <property type="match status" value="1"/>
</dbReference>
<dbReference type="SUPFAM" id="SSF47973">
    <property type="entry name" value="Ribosomal protein S7"/>
    <property type="match status" value="1"/>
</dbReference>
<dbReference type="PROSITE" id="PS00052">
    <property type="entry name" value="RIBOSOMAL_S7"/>
    <property type="match status" value="1"/>
</dbReference>
<comment type="function">
    <text evidence="1">One of the primary rRNA binding proteins, it binds directly to 16S rRNA where it nucleates assembly of the head domain of the 30S subunit.</text>
</comment>
<comment type="subunit">
    <text>Part of the 30S ribosomal subunit.</text>
</comment>
<comment type="subcellular location">
    <subcellularLocation>
        <location>Plastid</location>
        <location>Chloroplast</location>
    </subcellularLocation>
</comment>
<comment type="similarity">
    <text evidence="3">Belongs to the universal ribosomal protein uS7 family.</text>
</comment>
<feature type="chain" id="PRO_0000277041" description="Small ribosomal subunit protein uS7cz/uS7cy">
    <location>
        <begin position="1"/>
        <end position="155"/>
    </location>
</feature>